<accession>B7HFJ5</accession>
<dbReference type="EC" id="7.1.1.-" evidence="1"/>
<dbReference type="EMBL" id="CP001176">
    <property type="protein sequence ID" value="ACK60690.1"/>
    <property type="molecule type" value="Genomic_DNA"/>
</dbReference>
<dbReference type="RefSeq" id="WP_000236331.1">
    <property type="nucleotide sequence ID" value="NZ_VEHB01000004.1"/>
</dbReference>
<dbReference type="SMR" id="B7HFJ5"/>
<dbReference type="GeneID" id="92803556"/>
<dbReference type="KEGG" id="bcb:BCB4264_A5420"/>
<dbReference type="HOGENOM" id="CLU_055737_7_3_9"/>
<dbReference type="Proteomes" id="UP000007096">
    <property type="component" value="Chromosome"/>
</dbReference>
<dbReference type="GO" id="GO:0005886">
    <property type="term" value="C:plasma membrane"/>
    <property type="evidence" value="ECO:0007669"/>
    <property type="project" value="UniProtKB-SubCell"/>
</dbReference>
<dbReference type="GO" id="GO:0045271">
    <property type="term" value="C:respiratory chain complex I"/>
    <property type="evidence" value="ECO:0007669"/>
    <property type="project" value="TreeGrafter"/>
</dbReference>
<dbReference type="GO" id="GO:0051539">
    <property type="term" value="F:4 iron, 4 sulfur cluster binding"/>
    <property type="evidence" value="ECO:0007669"/>
    <property type="project" value="UniProtKB-KW"/>
</dbReference>
<dbReference type="GO" id="GO:0005506">
    <property type="term" value="F:iron ion binding"/>
    <property type="evidence" value="ECO:0007669"/>
    <property type="project" value="UniProtKB-UniRule"/>
</dbReference>
<dbReference type="GO" id="GO:0008137">
    <property type="term" value="F:NADH dehydrogenase (ubiquinone) activity"/>
    <property type="evidence" value="ECO:0007669"/>
    <property type="project" value="InterPro"/>
</dbReference>
<dbReference type="GO" id="GO:0050136">
    <property type="term" value="F:NADH:ubiquinone reductase (non-electrogenic) activity"/>
    <property type="evidence" value="ECO:0007669"/>
    <property type="project" value="UniProtKB-UniRule"/>
</dbReference>
<dbReference type="GO" id="GO:0048038">
    <property type="term" value="F:quinone binding"/>
    <property type="evidence" value="ECO:0007669"/>
    <property type="project" value="UniProtKB-KW"/>
</dbReference>
<dbReference type="GO" id="GO:0009060">
    <property type="term" value="P:aerobic respiration"/>
    <property type="evidence" value="ECO:0007669"/>
    <property type="project" value="TreeGrafter"/>
</dbReference>
<dbReference type="GO" id="GO:0015990">
    <property type="term" value="P:electron transport coupled proton transport"/>
    <property type="evidence" value="ECO:0007669"/>
    <property type="project" value="TreeGrafter"/>
</dbReference>
<dbReference type="FunFam" id="3.40.50.12280:FF:000002">
    <property type="entry name" value="NADH-quinone oxidoreductase subunit B"/>
    <property type="match status" value="1"/>
</dbReference>
<dbReference type="Gene3D" id="3.40.50.12280">
    <property type="match status" value="1"/>
</dbReference>
<dbReference type="HAMAP" id="MF_01356">
    <property type="entry name" value="NDH1_NuoB"/>
    <property type="match status" value="1"/>
</dbReference>
<dbReference type="InterPro" id="IPR006137">
    <property type="entry name" value="NADH_UbQ_OxRdtase-like_20kDa"/>
</dbReference>
<dbReference type="InterPro" id="IPR006138">
    <property type="entry name" value="NADH_UQ_OxRdtase_20Kd_su"/>
</dbReference>
<dbReference type="NCBIfam" id="TIGR01957">
    <property type="entry name" value="nuoB_fam"/>
    <property type="match status" value="1"/>
</dbReference>
<dbReference type="NCBIfam" id="NF005012">
    <property type="entry name" value="PRK06411.1"/>
    <property type="match status" value="1"/>
</dbReference>
<dbReference type="PANTHER" id="PTHR11995">
    <property type="entry name" value="NADH DEHYDROGENASE"/>
    <property type="match status" value="1"/>
</dbReference>
<dbReference type="PANTHER" id="PTHR11995:SF14">
    <property type="entry name" value="NADH DEHYDROGENASE [UBIQUINONE] IRON-SULFUR PROTEIN 7, MITOCHONDRIAL"/>
    <property type="match status" value="1"/>
</dbReference>
<dbReference type="Pfam" id="PF01058">
    <property type="entry name" value="Oxidored_q6"/>
    <property type="match status" value="1"/>
</dbReference>
<dbReference type="SUPFAM" id="SSF56770">
    <property type="entry name" value="HydA/Nqo6-like"/>
    <property type="match status" value="1"/>
</dbReference>
<gene>
    <name evidence="1" type="primary">nuoB</name>
    <name type="ordered locus">BCB4264_A5420</name>
</gene>
<sequence>MVINFEELHPNERAELERNIFFSTLEQLKGWARSNSLWPMTFGLACCAIEMMGVGSSHYDLDRFGSFFRTSPRQSDVMIVSGTVTKKMAPIVRRLYDQMPEPKWVIAMGSCATAGGPYVNSYAVVKGVDQIVPVDVYIPGCPPNPAALIYGINKLKEKIRYEAKTGKQVTNK</sequence>
<protein>
    <recommendedName>
        <fullName evidence="1">NADH-quinone oxidoreductase subunit B</fullName>
        <ecNumber evidence="1">7.1.1.-</ecNumber>
    </recommendedName>
    <alternativeName>
        <fullName evidence="1">NADH dehydrogenase I subunit B</fullName>
    </alternativeName>
    <alternativeName>
        <fullName evidence="1">NDH-1 subunit B</fullName>
    </alternativeName>
</protein>
<feature type="chain" id="PRO_0000376132" description="NADH-quinone oxidoreductase subunit B">
    <location>
        <begin position="1"/>
        <end position="172"/>
    </location>
</feature>
<feature type="binding site" evidence="1">
    <location>
        <position position="46"/>
    </location>
    <ligand>
        <name>[4Fe-4S] cluster</name>
        <dbReference type="ChEBI" id="CHEBI:49883"/>
    </ligand>
</feature>
<feature type="binding site" evidence="1">
    <location>
        <position position="47"/>
    </location>
    <ligand>
        <name>[4Fe-4S] cluster</name>
        <dbReference type="ChEBI" id="CHEBI:49883"/>
    </ligand>
</feature>
<feature type="binding site" evidence="1">
    <location>
        <position position="111"/>
    </location>
    <ligand>
        <name>[4Fe-4S] cluster</name>
        <dbReference type="ChEBI" id="CHEBI:49883"/>
    </ligand>
</feature>
<feature type="binding site" evidence="1">
    <location>
        <position position="141"/>
    </location>
    <ligand>
        <name>[4Fe-4S] cluster</name>
        <dbReference type="ChEBI" id="CHEBI:49883"/>
    </ligand>
</feature>
<reference key="1">
    <citation type="submission" date="2008-10" db="EMBL/GenBank/DDBJ databases">
        <title>Genome sequence of Bacillus cereus B4264.</title>
        <authorList>
            <person name="Dodson R.J."/>
            <person name="Durkin A.S."/>
            <person name="Rosovitz M.J."/>
            <person name="Rasko D.A."/>
            <person name="Hoffmaster A."/>
            <person name="Ravel J."/>
            <person name="Sutton G."/>
        </authorList>
    </citation>
    <scope>NUCLEOTIDE SEQUENCE [LARGE SCALE GENOMIC DNA]</scope>
    <source>
        <strain>B4264</strain>
    </source>
</reference>
<proteinExistence type="inferred from homology"/>
<name>NUOB_BACC4</name>
<comment type="function">
    <text evidence="1">NDH-1 shuttles electrons from NADH, via FMN and iron-sulfur (Fe-S) centers, to quinones in the respiratory chain. The immediate electron acceptor for the enzyme in this species is believed to be a menaquinone. Couples the redox reaction to proton translocation (for every two electrons transferred, four hydrogen ions are translocated across the cytoplasmic membrane), and thus conserves the redox energy in a proton gradient.</text>
</comment>
<comment type="catalytic activity">
    <reaction evidence="1">
        <text>a quinone + NADH + 5 H(+)(in) = a quinol + NAD(+) + 4 H(+)(out)</text>
        <dbReference type="Rhea" id="RHEA:57888"/>
        <dbReference type="ChEBI" id="CHEBI:15378"/>
        <dbReference type="ChEBI" id="CHEBI:24646"/>
        <dbReference type="ChEBI" id="CHEBI:57540"/>
        <dbReference type="ChEBI" id="CHEBI:57945"/>
        <dbReference type="ChEBI" id="CHEBI:132124"/>
    </reaction>
</comment>
<comment type="cofactor">
    <cofactor evidence="1">
        <name>[4Fe-4S] cluster</name>
        <dbReference type="ChEBI" id="CHEBI:49883"/>
    </cofactor>
    <text evidence="1">Binds 1 [4Fe-4S] cluster.</text>
</comment>
<comment type="subunit">
    <text evidence="1">NDH-1 is composed of 14 different subunits. Subunits NuoB, C, D, E, F, and G constitute the peripheral sector of the complex.</text>
</comment>
<comment type="subcellular location">
    <subcellularLocation>
        <location evidence="1">Cell membrane</location>
        <topology evidence="1">Peripheral membrane protein</topology>
        <orientation evidence="1">Cytoplasmic side</orientation>
    </subcellularLocation>
</comment>
<comment type="similarity">
    <text evidence="1">Belongs to the complex I 20 kDa subunit family.</text>
</comment>
<organism>
    <name type="scientific">Bacillus cereus (strain B4264)</name>
    <dbReference type="NCBI Taxonomy" id="405532"/>
    <lineage>
        <taxon>Bacteria</taxon>
        <taxon>Bacillati</taxon>
        <taxon>Bacillota</taxon>
        <taxon>Bacilli</taxon>
        <taxon>Bacillales</taxon>
        <taxon>Bacillaceae</taxon>
        <taxon>Bacillus</taxon>
        <taxon>Bacillus cereus group</taxon>
    </lineage>
</organism>
<evidence type="ECO:0000255" key="1">
    <source>
        <dbReference type="HAMAP-Rule" id="MF_01356"/>
    </source>
</evidence>
<keyword id="KW-0004">4Fe-4S</keyword>
<keyword id="KW-1003">Cell membrane</keyword>
<keyword id="KW-0408">Iron</keyword>
<keyword id="KW-0411">Iron-sulfur</keyword>
<keyword id="KW-0472">Membrane</keyword>
<keyword id="KW-0479">Metal-binding</keyword>
<keyword id="KW-0520">NAD</keyword>
<keyword id="KW-0874">Quinone</keyword>
<keyword id="KW-1278">Translocase</keyword>
<keyword id="KW-0813">Transport</keyword>